<reference key="1">
    <citation type="journal article" date="1988" name="Genetics">
        <title>Molecular evolution of the Escherichia coli chromosome. I. Analysis of structure and natural variation in a previously uncharacterized region between trp and tonB.</title>
        <authorList>
            <person name="Stoltzfus A."/>
            <person name="Leslie J.F."/>
            <person name="Milkman R."/>
        </authorList>
    </citation>
    <scope>NUCLEOTIDE SEQUENCE [GENOMIC DNA]</scope>
    <source>
        <strain>K12</strain>
    </source>
</reference>
<reference key="2">
    <citation type="submission" date="1995-04" db="EMBL/GenBank/DDBJ databases">
        <authorList>
            <person name="Milkman R."/>
        </authorList>
    </citation>
    <scope>NUCLEOTIDE SEQUENCE [GENOMIC DNA]</scope>
    <source>
        <strain>K12</strain>
        <strain>Various ECOR strains</strain>
    </source>
</reference>
<reference key="3">
    <citation type="journal article" date="1996" name="DNA Res.">
        <title>A 570-kb DNA sequence of the Escherichia coli K-12 genome corresponding to the 28.0-40.1 min region on the linkage map.</title>
        <authorList>
            <person name="Aiba H."/>
            <person name="Baba T."/>
            <person name="Fujita K."/>
            <person name="Hayashi K."/>
            <person name="Inada T."/>
            <person name="Isono K."/>
            <person name="Itoh T."/>
            <person name="Kasai H."/>
            <person name="Kashimoto K."/>
            <person name="Kimura S."/>
            <person name="Kitakawa M."/>
            <person name="Kitagawa M."/>
            <person name="Makino K."/>
            <person name="Miki T."/>
            <person name="Mizobuchi K."/>
            <person name="Mori H."/>
            <person name="Mori T."/>
            <person name="Motomura K."/>
            <person name="Nakade S."/>
            <person name="Nakamura Y."/>
            <person name="Nashimoto H."/>
            <person name="Nishio Y."/>
            <person name="Oshima T."/>
            <person name="Saito N."/>
            <person name="Sampei G."/>
            <person name="Seki Y."/>
            <person name="Sivasundaram S."/>
            <person name="Tagami H."/>
            <person name="Takeda J."/>
            <person name="Takemoto K."/>
            <person name="Takeuchi Y."/>
            <person name="Wada C."/>
            <person name="Yamamoto Y."/>
            <person name="Horiuchi T."/>
        </authorList>
    </citation>
    <scope>NUCLEOTIDE SEQUENCE [LARGE SCALE GENOMIC DNA]</scope>
    <source>
        <strain>K12 / W3110 / ATCC 27325 / DSM 5911</strain>
    </source>
</reference>
<reference key="4">
    <citation type="journal article" date="1997" name="Science">
        <title>The complete genome sequence of Escherichia coli K-12.</title>
        <authorList>
            <person name="Blattner F.R."/>
            <person name="Plunkett G. III"/>
            <person name="Bloch C.A."/>
            <person name="Perna N.T."/>
            <person name="Burland V."/>
            <person name="Riley M."/>
            <person name="Collado-Vides J."/>
            <person name="Glasner J.D."/>
            <person name="Rode C.K."/>
            <person name="Mayhew G.F."/>
            <person name="Gregor J."/>
            <person name="Davis N.W."/>
            <person name="Kirkpatrick H.A."/>
            <person name="Goeden M.A."/>
            <person name="Rose D.J."/>
            <person name="Mau B."/>
            <person name="Shao Y."/>
        </authorList>
    </citation>
    <scope>NUCLEOTIDE SEQUENCE [LARGE SCALE GENOMIC DNA]</scope>
    <source>
        <strain>K12 / MG1655 / ATCC 47076</strain>
    </source>
</reference>
<reference key="5">
    <citation type="journal article" date="2006" name="Mol. Syst. Biol.">
        <title>Highly accurate genome sequences of Escherichia coli K-12 strains MG1655 and W3110.</title>
        <authorList>
            <person name="Hayashi K."/>
            <person name="Morooka N."/>
            <person name="Yamamoto Y."/>
            <person name="Fujita K."/>
            <person name="Isono K."/>
            <person name="Choi S."/>
            <person name="Ohtsubo E."/>
            <person name="Baba T."/>
            <person name="Wanner B.L."/>
            <person name="Mori H."/>
            <person name="Horiuchi T."/>
        </authorList>
    </citation>
    <scope>NUCLEOTIDE SEQUENCE [LARGE SCALE GENOMIC DNA]</scope>
    <source>
        <strain>K12 / W3110 / ATCC 27325 / DSM 5911</strain>
    </source>
</reference>
<reference key="6">
    <citation type="journal article" date="1993" name="Mol. Gen. Genet.">
        <title>Function of the Escherichia coli nucleoid protein, H-NS: molecular analysis of a subset of proteins whose expression is enhanced in a hns deletion mutant.</title>
        <authorList>
            <person name="Yoshida T."/>
            <person name="Ueguchi C."/>
            <person name="Yamada H."/>
            <person name="Mizuno T."/>
        </authorList>
    </citation>
    <scope>PROTEIN SEQUENCE OF 1-20</scope>
    <source>
        <strain>K12</strain>
    </source>
</reference>
<protein>
    <recommendedName>
        <fullName>Protein YciE</fullName>
    </recommendedName>
</protein>
<accession>P21363</accession>
<keyword id="KW-0903">Direct protein sequencing</keyword>
<keyword id="KW-1185">Reference proteome</keyword>
<gene>
    <name type="primary">yciE</name>
    <name type="ordered locus">b1257</name>
    <name type="ordered locus">JW1249</name>
</gene>
<sequence>MNRIEHYHDWLRDAHAMEKQAESMLESMASRIDNYPELRARIEQHLSETKNQIVQLETILDRNDISRSVIKDSMSKMAALGQSIGGIFPSDEIVKGSISGYVFEQFEIACYTSLLAAAKNAGDTASIPTIEAILNEEKQMADWLIQNIPQTTEKFLIRSETDGVEAKK</sequence>
<feature type="chain" id="PRO_0000168873" description="Protein YciE">
    <location>
        <begin position="1"/>
        <end position="168"/>
    </location>
</feature>
<name>YCIE_ECOLI</name>
<organism>
    <name type="scientific">Escherichia coli (strain K12)</name>
    <dbReference type="NCBI Taxonomy" id="83333"/>
    <lineage>
        <taxon>Bacteria</taxon>
        <taxon>Pseudomonadati</taxon>
        <taxon>Pseudomonadota</taxon>
        <taxon>Gammaproteobacteria</taxon>
        <taxon>Enterobacterales</taxon>
        <taxon>Enterobacteriaceae</taxon>
        <taxon>Escherichia</taxon>
    </lineage>
</organism>
<dbReference type="EMBL" id="X13583">
    <property type="protein sequence ID" value="CAA31921.1"/>
    <property type="molecule type" value="Genomic_DNA"/>
</dbReference>
<dbReference type="EMBL" id="U23489">
    <property type="protein sequence ID" value="AAB60038.1"/>
    <property type="molecule type" value="Genomic_DNA"/>
</dbReference>
<dbReference type="EMBL" id="U00096">
    <property type="protein sequence ID" value="AAC74339.1"/>
    <property type="molecule type" value="Genomic_DNA"/>
</dbReference>
<dbReference type="EMBL" id="AP009048">
    <property type="protein sequence ID" value="BAA14789.1"/>
    <property type="molecule type" value="Genomic_DNA"/>
</dbReference>
<dbReference type="EMBL" id="U25417">
    <property type="protein sequence ID" value="AAA73794.1"/>
    <property type="molecule type" value="Genomic_DNA"/>
</dbReference>
<dbReference type="EMBL" id="U25418">
    <property type="protein sequence ID" value="AAA73800.1"/>
    <property type="molecule type" value="Genomic_DNA"/>
</dbReference>
<dbReference type="EMBL" id="U25419">
    <property type="protein sequence ID" value="AAA73806.1"/>
    <property type="molecule type" value="Genomic_DNA"/>
</dbReference>
<dbReference type="EMBL" id="U25420">
    <property type="protein sequence ID" value="AAA73812.1"/>
    <property type="molecule type" value="Genomic_DNA"/>
</dbReference>
<dbReference type="EMBL" id="U25422">
    <property type="protein sequence ID" value="AAA73824.1"/>
    <property type="molecule type" value="Genomic_DNA"/>
</dbReference>
<dbReference type="EMBL" id="U23490">
    <property type="protein sequence ID" value="AAA65143.1"/>
    <property type="molecule type" value="Genomic_DNA"/>
</dbReference>
<dbReference type="EMBL" id="U23491">
    <property type="protein sequence ID" value="AAA65149.1"/>
    <property type="molecule type" value="Genomic_DNA"/>
</dbReference>
<dbReference type="EMBL" id="U23492">
    <property type="protein sequence ID" value="AAA65155.1"/>
    <property type="molecule type" value="Genomic_DNA"/>
</dbReference>
<dbReference type="PIR" id="S07796">
    <property type="entry name" value="S07796"/>
</dbReference>
<dbReference type="RefSeq" id="NP_415773.1">
    <property type="nucleotide sequence ID" value="NC_000913.3"/>
</dbReference>
<dbReference type="RefSeq" id="WP_001079505.1">
    <property type="nucleotide sequence ID" value="NZ_SSZK01000031.1"/>
</dbReference>
<dbReference type="SMR" id="P21363"/>
<dbReference type="BioGRID" id="4260137">
    <property type="interactions" value="14"/>
</dbReference>
<dbReference type="DIP" id="DIP-11579N"/>
<dbReference type="FunCoup" id="P21363">
    <property type="interactions" value="29"/>
</dbReference>
<dbReference type="IntAct" id="P21363">
    <property type="interactions" value="4"/>
</dbReference>
<dbReference type="STRING" id="511145.b1257"/>
<dbReference type="jPOST" id="P21363"/>
<dbReference type="PaxDb" id="511145-b1257"/>
<dbReference type="EnsemblBacteria" id="AAC74339">
    <property type="protein sequence ID" value="AAC74339"/>
    <property type="gene ID" value="b1257"/>
</dbReference>
<dbReference type="GeneID" id="946871"/>
<dbReference type="KEGG" id="ecj:JW1249"/>
<dbReference type="KEGG" id="eco:b1257"/>
<dbReference type="KEGG" id="ecoc:C3026_07380"/>
<dbReference type="PATRIC" id="fig|1411691.4.peg.1026"/>
<dbReference type="EchoBASE" id="EB1115"/>
<dbReference type="eggNOG" id="COG3685">
    <property type="taxonomic scope" value="Bacteria"/>
</dbReference>
<dbReference type="HOGENOM" id="CLU_093759_1_0_6"/>
<dbReference type="InParanoid" id="P21363"/>
<dbReference type="OMA" id="RIDQHIE"/>
<dbReference type="OrthoDB" id="7273732at2"/>
<dbReference type="PhylomeDB" id="P21363"/>
<dbReference type="BioCyc" id="EcoCyc:EG11125-MONOMER"/>
<dbReference type="PRO" id="PR:P21363"/>
<dbReference type="Proteomes" id="UP000000625">
    <property type="component" value="Chromosome"/>
</dbReference>
<dbReference type="Gene3D" id="1.20.1260.10">
    <property type="match status" value="1"/>
</dbReference>
<dbReference type="InterPro" id="IPR010287">
    <property type="entry name" value="DUF892_YciF-like"/>
</dbReference>
<dbReference type="InterPro" id="IPR012347">
    <property type="entry name" value="Ferritin-like"/>
</dbReference>
<dbReference type="InterPro" id="IPR009078">
    <property type="entry name" value="Ferritin-like_SF"/>
</dbReference>
<dbReference type="Pfam" id="PF05974">
    <property type="entry name" value="DUF892"/>
    <property type="match status" value="1"/>
</dbReference>
<dbReference type="SUPFAM" id="SSF47240">
    <property type="entry name" value="Ferritin-like"/>
    <property type="match status" value="1"/>
</dbReference>
<proteinExistence type="evidence at protein level"/>